<organism>
    <name type="scientific">Pseudomonas fluorescens (strain Pf0-1)</name>
    <dbReference type="NCBI Taxonomy" id="205922"/>
    <lineage>
        <taxon>Bacteria</taxon>
        <taxon>Pseudomonadati</taxon>
        <taxon>Pseudomonadota</taxon>
        <taxon>Gammaproteobacteria</taxon>
        <taxon>Pseudomonadales</taxon>
        <taxon>Pseudomonadaceae</taxon>
        <taxon>Pseudomonas</taxon>
    </lineage>
</organism>
<sequence>MSACQTPIIVALDFPTRDAALKLADQLDPKLCRVKVGKELFTSCAAEIVGTLRDKGFEVFLDLKFHDIPNTTAMAVKAAAEMGVWMVNVHCSGGLRMMAACREELDKRSGPQPLLIGVTVLTSMEREDLAGIGLDIEPQEQVLRLAALAEKAGMDGLVCSALEATALKTAHPSLQLVTPGIRPAGSAQDDQRRILTPRQALDAGSDYLVIGRPISQAADPAKALASVVAELA</sequence>
<feature type="chain" id="PRO_0000241890" description="Orotidine 5'-phosphate decarboxylase">
    <location>
        <begin position="1"/>
        <end position="232"/>
    </location>
</feature>
<feature type="active site" description="Proton donor" evidence="1">
    <location>
        <position position="64"/>
    </location>
</feature>
<feature type="binding site" evidence="1">
    <location>
        <position position="13"/>
    </location>
    <ligand>
        <name>substrate</name>
    </ligand>
</feature>
<feature type="binding site" evidence="1">
    <location>
        <position position="35"/>
    </location>
    <ligand>
        <name>substrate</name>
    </ligand>
</feature>
<feature type="binding site" evidence="1">
    <location>
        <begin position="62"/>
        <end position="71"/>
    </location>
    <ligand>
        <name>substrate</name>
    </ligand>
</feature>
<feature type="binding site" evidence="1">
    <location>
        <position position="122"/>
    </location>
    <ligand>
        <name>substrate</name>
    </ligand>
</feature>
<feature type="binding site" evidence="1">
    <location>
        <position position="182"/>
    </location>
    <ligand>
        <name>substrate</name>
    </ligand>
</feature>
<feature type="binding site" evidence="1">
    <location>
        <position position="191"/>
    </location>
    <ligand>
        <name>substrate</name>
    </ligand>
</feature>
<feature type="binding site" evidence="1">
    <location>
        <position position="211"/>
    </location>
    <ligand>
        <name>substrate</name>
    </ligand>
</feature>
<feature type="binding site" evidence="1">
    <location>
        <position position="212"/>
    </location>
    <ligand>
        <name>substrate</name>
    </ligand>
</feature>
<proteinExistence type="inferred from homology"/>
<reference key="1">
    <citation type="journal article" date="2009" name="Genome Biol.">
        <title>Genomic and genetic analyses of diversity and plant interactions of Pseudomonas fluorescens.</title>
        <authorList>
            <person name="Silby M.W."/>
            <person name="Cerdeno-Tarraga A.M."/>
            <person name="Vernikos G.S."/>
            <person name="Giddens S.R."/>
            <person name="Jackson R.W."/>
            <person name="Preston G.M."/>
            <person name="Zhang X.-X."/>
            <person name="Moon C.D."/>
            <person name="Gehrig S.M."/>
            <person name="Godfrey S.A.C."/>
            <person name="Knight C.G."/>
            <person name="Malone J.G."/>
            <person name="Robinson Z."/>
            <person name="Spiers A.J."/>
            <person name="Harris S."/>
            <person name="Challis G.L."/>
            <person name="Yaxley A.M."/>
            <person name="Harris D."/>
            <person name="Seeger K."/>
            <person name="Murphy L."/>
            <person name="Rutter S."/>
            <person name="Squares R."/>
            <person name="Quail M.A."/>
            <person name="Saunders E."/>
            <person name="Mavromatis K."/>
            <person name="Brettin T.S."/>
            <person name="Bentley S.D."/>
            <person name="Hothersall J."/>
            <person name="Stephens E."/>
            <person name="Thomas C.M."/>
            <person name="Parkhill J."/>
            <person name="Levy S.B."/>
            <person name="Rainey P.B."/>
            <person name="Thomson N.R."/>
        </authorList>
    </citation>
    <scope>NUCLEOTIDE SEQUENCE [LARGE SCALE GENOMIC DNA]</scope>
    <source>
        <strain>Pf0-1</strain>
    </source>
</reference>
<name>PYRF_PSEPF</name>
<protein>
    <recommendedName>
        <fullName evidence="1">Orotidine 5'-phosphate decarboxylase</fullName>
        <ecNumber evidence="1">4.1.1.23</ecNumber>
    </recommendedName>
    <alternativeName>
        <fullName evidence="1">OMP decarboxylase</fullName>
        <shortName evidence="1">OMPDCase</shortName>
        <shortName evidence="1">OMPdecase</shortName>
    </alternativeName>
</protein>
<evidence type="ECO:0000255" key="1">
    <source>
        <dbReference type="HAMAP-Rule" id="MF_01200"/>
    </source>
</evidence>
<evidence type="ECO:0000305" key="2"/>
<gene>
    <name evidence="1" type="primary">pyrF</name>
    <name type="ordered locus">Pfl01_4196</name>
</gene>
<comment type="function">
    <text evidence="1">Catalyzes the decarboxylation of orotidine 5'-monophosphate (OMP) to uridine 5'-monophosphate (UMP).</text>
</comment>
<comment type="catalytic activity">
    <reaction evidence="1">
        <text>orotidine 5'-phosphate + H(+) = UMP + CO2</text>
        <dbReference type="Rhea" id="RHEA:11596"/>
        <dbReference type="ChEBI" id="CHEBI:15378"/>
        <dbReference type="ChEBI" id="CHEBI:16526"/>
        <dbReference type="ChEBI" id="CHEBI:57538"/>
        <dbReference type="ChEBI" id="CHEBI:57865"/>
        <dbReference type="EC" id="4.1.1.23"/>
    </reaction>
</comment>
<comment type="pathway">
    <text evidence="1">Pyrimidine metabolism; UMP biosynthesis via de novo pathway; UMP from orotate: step 2/2.</text>
</comment>
<comment type="subunit">
    <text evidence="1">Homodimer.</text>
</comment>
<comment type="similarity">
    <text evidence="1">Belongs to the OMP decarboxylase family. Type 1 subfamily.</text>
</comment>
<comment type="sequence caution" evidence="2">
    <conflict type="erroneous initiation">
        <sequence resource="EMBL-CDS" id="ABA75933"/>
    </conflict>
</comment>
<dbReference type="EC" id="4.1.1.23" evidence="1"/>
<dbReference type="EMBL" id="CP000094">
    <property type="protein sequence ID" value="ABA75933.1"/>
    <property type="status" value="ALT_INIT"/>
    <property type="molecule type" value="Genomic_DNA"/>
</dbReference>
<dbReference type="RefSeq" id="WP_007960372.1">
    <property type="nucleotide sequence ID" value="NC_007492.2"/>
</dbReference>
<dbReference type="SMR" id="Q3K8H1"/>
<dbReference type="KEGG" id="pfo:Pfl01_4196"/>
<dbReference type="eggNOG" id="COG0284">
    <property type="taxonomic scope" value="Bacteria"/>
</dbReference>
<dbReference type="HOGENOM" id="CLU_067069_0_0_6"/>
<dbReference type="UniPathway" id="UPA00070">
    <property type="reaction ID" value="UER00120"/>
</dbReference>
<dbReference type="Proteomes" id="UP000002704">
    <property type="component" value="Chromosome"/>
</dbReference>
<dbReference type="GO" id="GO:0005829">
    <property type="term" value="C:cytosol"/>
    <property type="evidence" value="ECO:0007669"/>
    <property type="project" value="TreeGrafter"/>
</dbReference>
<dbReference type="GO" id="GO:0004590">
    <property type="term" value="F:orotidine-5'-phosphate decarboxylase activity"/>
    <property type="evidence" value="ECO:0007669"/>
    <property type="project" value="UniProtKB-UniRule"/>
</dbReference>
<dbReference type="GO" id="GO:0006207">
    <property type="term" value="P:'de novo' pyrimidine nucleobase biosynthetic process"/>
    <property type="evidence" value="ECO:0007669"/>
    <property type="project" value="InterPro"/>
</dbReference>
<dbReference type="GO" id="GO:0044205">
    <property type="term" value="P:'de novo' UMP biosynthetic process"/>
    <property type="evidence" value="ECO:0007669"/>
    <property type="project" value="UniProtKB-UniRule"/>
</dbReference>
<dbReference type="CDD" id="cd04725">
    <property type="entry name" value="OMP_decarboxylase_like"/>
    <property type="match status" value="1"/>
</dbReference>
<dbReference type="FunFam" id="3.20.20.70:FF:000015">
    <property type="entry name" value="Orotidine 5'-phosphate decarboxylase"/>
    <property type="match status" value="1"/>
</dbReference>
<dbReference type="Gene3D" id="3.20.20.70">
    <property type="entry name" value="Aldolase class I"/>
    <property type="match status" value="1"/>
</dbReference>
<dbReference type="HAMAP" id="MF_01200_B">
    <property type="entry name" value="OMPdecase_type1_B"/>
    <property type="match status" value="1"/>
</dbReference>
<dbReference type="InterPro" id="IPR013785">
    <property type="entry name" value="Aldolase_TIM"/>
</dbReference>
<dbReference type="InterPro" id="IPR014732">
    <property type="entry name" value="OMPdecase"/>
</dbReference>
<dbReference type="InterPro" id="IPR018089">
    <property type="entry name" value="OMPdecase_AS"/>
</dbReference>
<dbReference type="InterPro" id="IPR047596">
    <property type="entry name" value="OMPdecase_bac"/>
</dbReference>
<dbReference type="InterPro" id="IPR001754">
    <property type="entry name" value="OMPdeCOase_dom"/>
</dbReference>
<dbReference type="InterPro" id="IPR011060">
    <property type="entry name" value="RibuloseP-bd_barrel"/>
</dbReference>
<dbReference type="NCBIfam" id="NF001273">
    <property type="entry name" value="PRK00230.1"/>
    <property type="match status" value="1"/>
</dbReference>
<dbReference type="NCBIfam" id="TIGR01740">
    <property type="entry name" value="pyrF"/>
    <property type="match status" value="1"/>
</dbReference>
<dbReference type="PANTHER" id="PTHR32119">
    <property type="entry name" value="OROTIDINE 5'-PHOSPHATE DECARBOXYLASE"/>
    <property type="match status" value="1"/>
</dbReference>
<dbReference type="PANTHER" id="PTHR32119:SF2">
    <property type="entry name" value="OROTIDINE 5'-PHOSPHATE DECARBOXYLASE"/>
    <property type="match status" value="1"/>
</dbReference>
<dbReference type="Pfam" id="PF00215">
    <property type="entry name" value="OMPdecase"/>
    <property type="match status" value="1"/>
</dbReference>
<dbReference type="SMART" id="SM00934">
    <property type="entry name" value="OMPdecase"/>
    <property type="match status" value="1"/>
</dbReference>
<dbReference type="SUPFAM" id="SSF51366">
    <property type="entry name" value="Ribulose-phoshate binding barrel"/>
    <property type="match status" value="1"/>
</dbReference>
<dbReference type="PROSITE" id="PS00156">
    <property type="entry name" value="OMPDECASE"/>
    <property type="match status" value="1"/>
</dbReference>
<accession>Q3K8H1</accession>
<keyword id="KW-0210">Decarboxylase</keyword>
<keyword id="KW-0456">Lyase</keyword>
<keyword id="KW-0665">Pyrimidine biosynthesis</keyword>